<gene>
    <name evidence="1" type="primary">fluC</name>
    <name evidence="1" type="synonym">crcB</name>
    <name type="ordered locus">CYB_0154</name>
</gene>
<dbReference type="EMBL" id="CP000240">
    <property type="protein sequence ID" value="ABD01155.1"/>
    <property type="status" value="ALT_INIT"/>
    <property type="molecule type" value="Genomic_DNA"/>
</dbReference>
<dbReference type="RefSeq" id="WP_011431826.1">
    <property type="nucleotide sequence ID" value="NC_007776.1"/>
</dbReference>
<dbReference type="SMR" id="Q2JPX1"/>
<dbReference type="STRING" id="321332.CYB_0154"/>
<dbReference type="KEGG" id="cyb:CYB_0154"/>
<dbReference type="eggNOG" id="COG0239">
    <property type="taxonomic scope" value="Bacteria"/>
</dbReference>
<dbReference type="HOGENOM" id="CLU_114342_3_0_3"/>
<dbReference type="OrthoDB" id="9815830at2"/>
<dbReference type="Proteomes" id="UP000001938">
    <property type="component" value="Chromosome"/>
</dbReference>
<dbReference type="GO" id="GO:0005886">
    <property type="term" value="C:plasma membrane"/>
    <property type="evidence" value="ECO:0007669"/>
    <property type="project" value="UniProtKB-SubCell"/>
</dbReference>
<dbReference type="GO" id="GO:0062054">
    <property type="term" value="F:fluoride channel activity"/>
    <property type="evidence" value="ECO:0007669"/>
    <property type="project" value="UniProtKB-UniRule"/>
</dbReference>
<dbReference type="GO" id="GO:0046872">
    <property type="term" value="F:metal ion binding"/>
    <property type="evidence" value="ECO:0007669"/>
    <property type="project" value="UniProtKB-KW"/>
</dbReference>
<dbReference type="GO" id="GO:0140114">
    <property type="term" value="P:cellular detoxification of fluoride"/>
    <property type="evidence" value="ECO:0007669"/>
    <property type="project" value="UniProtKB-UniRule"/>
</dbReference>
<dbReference type="HAMAP" id="MF_00454">
    <property type="entry name" value="FluC"/>
    <property type="match status" value="1"/>
</dbReference>
<dbReference type="InterPro" id="IPR003691">
    <property type="entry name" value="FluC"/>
</dbReference>
<dbReference type="NCBIfam" id="TIGR00494">
    <property type="entry name" value="crcB"/>
    <property type="match status" value="1"/>
</dbReference>
<dbReference type="PANTHER" id="PTHR28259">
    <property type="entry name" value="FLUORIDE EXPORT PROTEIN 1-RELATED"/>
    <property type="match status" value="1"/>
</dbReference>
<dbReference type="PANTHER" id="PTHR28259:SF1">
    <property type="entry name" value="FLUORIDE EXPORT PROTEIN 1-RELATED"/>
    <property type="match status" value="1"/>
</dbReference>
<dbReference type="Pfam" id="PF02537">
    <property type="entry name" value="CRCB"/>
    <property type="match status" value="1"/>
</dbReference>
<keyword id="KW-0997">Cell inner membrane</keyword>
<keyword id="KW-1003">Cell membrane</keyword>
<keyword id="KW-0407">Ion channel</keyword>
<keyword id="KW-0406">Ion transport</keyword>
<keyword id="KW-0472">Membrane</keyword>
<keyword id="KW-0479">Metal-binding</keyword>
<keyword id="KW-1185">Reference proteome</keyword>
<keyword id="KW-0915">Sodium</keyword>
<keyword id="KW-0812">Transmembrane</keyword>
<keyword id="KW-1133">Transmembrane helix</keyword>
<keyword id="KW-0813">Transport</keyword>
<proteinExistence type="inferred from homology"/>
<name>FLUC_SYNJB</name>
<organism>
    <name type="scientific">Synechococcus sp. (strain JA-2-3B'a(2-13))</name>
    <name type="common">Cyanobacteria bacterium Yellowstone B-Prime</name>
    <dbReference type="NCBI Taxonomy" id="321332"/>
    <lineage>
        <taxon>Bacteria</taxon>
        <taxon>Bacillati</taxon>
        <taxon>Cyanobacteriota</taxon>
        <taxon>Cyanophyceae</taxon>
        <taxon>Synechococcales</taxon>
        <taxon>Synechococcaceae</taxon>
        <taxon>Synechococcus</taxon>
    </lineage>
</organism>
<feature type="chain" id="PRO_0000252954" description="Fluoride-specific ion channel FluC">
    <location>
        <begin position="1"/>
        <end position="130"/>
    </location>
</feature>
<feature type="transmembrane region" description="Helical" evidence="1">
    <location>
        <begin position="10"/>
        <end position="30"/>
    </location>
</feature>
<feature type="transmembrane region" description="Helical" evidence="1">
    <location>
        <begin position="41"/>
        <end position="61"/>
    </location>
</feature>
<feature type="transmembrane region" description="Helical" evidence="1">
    <location>
        <begin position="72"/>
        <end position="89"/>
    </location>
</feature>
<feature type="transmembrane region" description="Helical" evidence="1">
    <location>
        <begin position="105"/>
        <end position="125"/>
    </location>
</feature>
<feature type="binding site" evidence="1">
    <location>
        <position position="80"/>
    </location>
    <ligand>
        <name>Na(+)</name>
        <dbReference type="ChEBI" id="CHEBI:29101"/>
        <note>structural</note>
    </ligand>
</feature>
<feature type="binding site" evidence="1">
    <location>
        <position position="83"/>
    </location>
    <ligand>
        <name>Na(+)</name>
        <dbReference type="ChEBI" id="CHEBI:29101"/>
        <note>structural</note>
    </ligand>
</feature>
<evidence type="ECO:0000255" key="1">
    <source>
        <dbReference type="HAMAP-Rule" id="MF_00454"/>
    </source>
</evidence>
<evidence type="ECO:0000305" key="2"/>
<comment type="function">
    <text evidence="1">Fluoride-specific ion channel. Important for reducing fluoride concentration in the cell, thus reducing its toxicity.</text>
</comment>
<comment type="catalytic activity">
    <reaction evidence="1">
        <text>fluoride(in) = fluoride(out)</text>
        <dbReference type="Rhea" id="RHEA:76159"/>
        <dbReference type="ChEBI" id="CHEBI:17051"/>
    </reaction>
    <physiologicalReaction direction="left-to-right" evidence="1">
        <dbReference type="Rhea" id="RHEA:76160"/>
    </physiologicalReaction>
</comment>
<comment type="activity regulation">
    <text evidence="1">Na(+) is not transported, but it plays an essential structural role and its presence is essential for fluoride channel function.</text>
</comment>
<comment type="subcellular location">
    <subcellularLocation>
        <location evidence="1">Cell inner membrane</location>
        <topology evidence="1">Multi-pass membrane protein</topology>
    </subcellularLocation>
</comment>
<comment type="similarity">
    <text evidence="1">Belongs to the fluoride channel Fluc/FEX (TC 1.A.43) family.</text>
</comment>
<comment type="sequence caution" evidence="2">
    <conflict type="erroneous initiation">
        <sequence resource="EMBL-CDS" id="ABD01155"/>
    </conflict>
</comment>
<reference key="1">
    <citation type="journal article" date="2007" name="ISME J.">
        <title>Population level functional diversity in a microbial community revealed by comparative genomic and metagenomic analyses.</title>
        <authorList>
            <person name="Bhaya D."/>
            <person name="Grossman A.R."/>
            <person name="Steunou A.-S."/>
            <person name="Khuri N."/>
            <person name="Cohan F.M."/>
            <person name="Hamamura N."/>
            <person name="Melendrez M.C."/>
            <person name="Bateson M.M."/>
            <person name="Ward D.M."/>
            <person name="Heidelberg J.F."/>
        </authorList>
    </citation>
    <scope>NUCLEOTIDE SEQUENCE [LARGE SCALE GENOMIC DNA]</scope>
    <source>
        <strain>JA-2-3B'a(2-13)</strain>
    </source>
</reference>
<protein>
    <recommendedName>
        <fullName evidence="1">Fluoride-specific ion channel FluC</fullName>
    </recommendedName>
</protein>
<sequence>MVSPSLRVPFAVALGAIGGSLSRYYLSLWFAERFGPSFPYGTLIINLSGCVVMGWFMTVAMERPEISPEIRLLFGVGFLGSYTTFSTYELDTFSLWQQHRFATGLVYWLGSCLFGALAMELGILLARLWR</sequence>
<accession>Q2JPX1</accession>